<proteinExistence type="inferred from homology"/>
<protein>
    <recommendedName>
        <fullName evidence="1">Small ribosomal subunit protein uS13</fullName>
    </recommendedName>
    <alternativeName>
        <fullName evidence="3">30S ribosomal protein S13</fullName>
    </alternativeName>
</protein>
<gene>
    <name evidence="1" type="primary">rpsM</name>
    <name type="ordered locus">COSY_0191</name>
</gene>
<comment type="function">
    <text evidence="1">Located at the top of the head of the 30S subunit, it contacts several helices of the 16S rRNA. In the 70S ribosome it contacts the 23S rRNA (bridge B1a) and protein L5 of the 50S subunit (bridge B1b), connecting the 2 subunits; these bridges are implicated in subunit movement. Contacts the tRNAs in the A and P-sites.</text>
</comment>
<comment type="subunit">
    <text evidence="1">Part of the 30S ribosomal subunit. Forms a loose heterodimer with protein S19. Forms two bridges to the 50S subunit in the 70S ribosome.</text>
</comment>
<comment type="similarity">
    <text evidence="1">Belongs to the universal ribosomal protein uS13 family.</text>
</comment>
<evidence type="ECO:0000255" key="1">
    <source>
        <dbReference type="HAMAP-Rule" id="MF_01315"/>
    </source>
</evidence>
<evidence type="ECO:0000256" key="2">
    <source>
        <dbReference type="SAM" id="MobiDB-lite"/>
    </source>
</evidence>
<evidence type="ECO:0000305" key="3"/>
<reference key="1">
    <citation type="journal article" date="2007" name="Curr. Biol.">
        <title>Reduced genome of the thioautotrophic intracellular symbiont in a deep-sea clam, Calyptogena okutanii.</title>
        <authorList>
            <person name="Kuwahara H."/>
            <person name="Yoshida T."/>
            <person name="Takaki Y."/>
            <person name="Shimamura S."/>
            <person name="Nishi S."/>
            <person name="Harada M."/>
            <person name="Matsuyama K."/>
            <person name="Takishita K."/>
            <person name="Kawato M."/>
            <person name="Uematsu K."/>
            <person name="Fujiwara Y."/>
            <person name="Sato T."/>
            <person name="Kato C."/>
            <person name="Kitagawa M."/>
            <person name="Kato I."/>
            <person name="Maruyama T."/>
        </authorList>
    </citation>
    <scope>NUCLEOTIDE SEQUENCE [LARGE SCALE GENOMIC DNA]</scope>
    <source>
        <strain>HA</strain>
    </source>
</reference>
<organism>
    <name type="scientific">Vesicomyosocius okutanii subsp. Calyptogena okutanii (strain HA)</name>
    <dbReference type="NCBI Taxonomy" id="412965"/>
    <lineage>
        <taxon>Bacteria</taxon>
        <taxon>Pseudomonadati</taxon>
        <taxon>Pseudomonadota</taxon>
        <taxon>Gammaproteobacteria</taxon>
        <taxon>Candidatus Pseudothioglobaceae</taxon>
        <taxon>Candidatus Vesicomyosocius</taxon>
    </lineage>
</organism>
<keyword id="KW-1185">Reference proteome</keyword>
<keyword id="KW-0687">Ribonucleoprotein</keyword>
<keyword id="KW-0689">Ribosomal protein</keyword>
<keyword id="KW-0694">RNA-binding</keyword>
<keyword id="KW-0699">rRNA-binding</keyword>
<keyword id="KW-0820">tRNA-binding</keyword>
<dbReference type="EMBL" id="AP009247">
    <property type="protein sequence ID" value="BAF61321.1"/>
    <property type="molecule type" value="Genomic_DNA"/>
</dbReference>
<dbReference type="RefSeq" id="WP_011929591.1">
    <property type="nucleotide sequence ID" value="NC_009465.1"/>
</dbReference>
<dbReference type="SMR" id="A5CXI6"/>
<dbReference type="STRING" id="412965.COSY_0191"/>
<dbReference type="KEGG" id="vok:COSY_0191"/>
<dbReference type="eggNOG" id="COG0099">
    <property type="taxonomic scope" value="Bacteria"/>
</dbReference>
<dbReference type="HOGENOM" id="CLU_103849_1_2_6"/>
<dbReference type="OrthoDB" id="9803610at2"/>
<dbReference type="Proteomes" id="UP000000247">
    <property type="component" value="Chromosome"/>
</dbReference>
<dbReference type="GO" id="GO:0005829">
    <property type="term" value="C:cytosol"/>
    <property type="evidence" value="ECO:0007669"/>
    <property type="project" value="TreeGrafter"/>
</dbReference>
<dbReference type="GO" id="GO:0015935">
    <property type="term" value="C:small ribosomal subunit"/>
    <property type="evidence" value="ECO:0007669"/>
    <property type="project" value="TreeGrafter"/>
</dbReference>
<dbReference type="GO" id="GO:0019843">
    <property type="term" value="F:rRNA binding"/>
    <property type="evidence" value="ECO:0007669"/>
    <property type="project" value="UniProtKB-UniRule"/>
</dbReference>
<dbReference type="GO" id="GO:0003735">
    <property type="term" value="F:structural constituent of ribosome"/>
    <property type="evidence" value="ECO:0007669"/>
    <property type="project" value="InterPro"/>
</dbReference>
<dbReference type="GO" id="GO:0000049">
    <property type="term" value="F:tRNA binding"/>
    <property type="evidence" value="ECO:0007669"/>
    <property type="project" value="UniProtKB-UniRule"/>
</dbReference>
<dbReference type="GO" id="GO:0006412">
    <property type="term" value="P:translation"/>
    <property type="evidence" value="ECO:0007669"/>
    <property type="project" value="UniProtKB-UniRule"/>
</dbReference>
<dbReference type="FunFam" id="1.10.8.50:FF:000001">
    <property type="entry name" value="30S ribosomal protein S13"/>
    <property type="match status" value="1"/>
</dbReference>
<dbReference type="FunFam" id="4.10.910.10:FF:000001">
    <property type="entry name" value="30S ribosomal protein S13"/>
    <property type="match status" value="1"/>
</dbReference>
<dbReference type="Gene3D" id="1.10.8.50">
    <property type="match status" value="1"/>
</dbReference>
<dbReference type="Gene3D" id="4.10.910.10">
    <property type="entry name" value="30s ribosomal protein s13, domain 2"/>
    <property type="match status" value="1"/>
</dbReference>
<dbReference type="HAMAP" id="MF_01315">
    <property type="entry name" value="Ribosomal_uS13"/>
    <property type="match status" value="1"/>
</dbReference>
<dbReference type="InterPro" id="IPR027437">
    <property type="entry name" value="Rbsml_uS13_C"/>
</dbReference>
<dbReference type="InterPro" id="IPR001892">
    <property type="entry name" value="Ribosomal_uS13"/>
</dbReference>
<dbReference type="InterPro" id="IPR010979">
    <property type="entry name" value="Ribosomal_uS13-like_H2TH"/>
</dbReference>
<dbReference type="InterPro" id="IPR019980">
    <property type="entry name" value="Ribosomal_uS13_bac-type"/>
</dbReference>
<dbReference type="InterPro" id="IPR018269">
    <property type="entry name" value="Ribosomal_uS13_CS"/>
</dbReference>
<dbReference type="NCBIfam" id="TIGR03631">
    <property type="entry name" value="uS13_bact"/>
    <property type="match status" value="1"/>
</dbReference>
<dbReference type="PANTHER" id="PTHR10871">
    <property type="entry name" value="30S RIBOSOMAL PROTEIN S13/40S RIBOSOMAL PROTEIN S18"/>
    <property type="match status" value="1"/>
</dbReference>
<dbReference type="PANTHER" id="PTHR10871:SF1">
    <property type="entry name" value="SMALL RIBOSOMAL SUBUNIT PROTEIN US13M"/>
    <property type="match status" value="1"/>
</dbReference>
<dbReference type="Pfam" id="PF00416">
    <property type="entry name" value="Ribosomal_S13"/>
    <property type="match status" value="1"/>
</dbReference>
<dbReference type="PIRSF" id="PIRSF002134">
    <property type="entry name" value="Ribosomal_S13"/>
    <property type="match status" value="1"/>
</dbReference>
<dbReference type="SUPFAM" id="SSF46946">
    <property type="entry name" value="S13-like H2TH domain"/>
    <property type="match status" value="1"/>
</dbReference>
<dbReference type="PROSITE" id="PS00646">
    <property type="entry name" value="RIBOSOMAL_S13_1"/>
    <property type="match status" value="1"/>
</dbReference>
<dbReference type="PROSITE" id="PS50159">
    <property type="entry name" value="RIBOSOMAL_S13_2"/>
    <property type="match status" value="1"/>
</dbReference>
<feature type="chain" id="PRO_0000306741" description="Small ribosomal subunit protein uS13">
    <location>
        <begin position="1"/>
        <end position="117"/>
    </location>
</feature>
<feature type="region of interest" description="Disordered" evidence="2">
    <location>
        <begin position="94"/>
        <end position="117"/>
    </location>
</feature>
<name>RS13_VESOH</name>
<accession>A5CXI6</accession>
<sequence>MARIAGINIPTHKHIVIGLQSIFGIGDTRAREICITLKLDPVTKVANITENQLELIRVEIAKYEVEGDLRRQLAMDIKRLKDLGCYRGVRHRKSLPLRGQRTKTNARTRKGPRRLIK</sequence>